<evidence type="ECO:0000255" key="1">
    <source>
        <dbReference type="HAMAP-Rule" id="MF_01659"/>
    </source>
</evidence>
<dbReference type="EC" id="2.2.1.9" evidence="1"/>
<dbReference type="EMBL" id="AP009044">
    <property type="protein sequence ID" value="BAF53538.1"/>
    <property type="molecule type" value="Genomic_DNA"/>
</dbReference>
<dbReference type="RefSeq" id="WP_011896739.1">
    <property type="nucleotide sequence ID" value="NC_009342.1"/>
</dbReference>
<dbReference type="SMR" id="A4QBE1"/>
<dbReference type="KEGG" id="cgt:cgR_0570"/>
<dbReference type="HOGENOM" id="CLU_006051_4_1_11"/>
<dbReference type="PhylomeDB" id="A4QBE1"/>
<dbReference type="UniPathway" id="UPA00079"/>
<dbReference type="UniPathway" id="UPA01057">
    <property type="reaction ID" value="UER00164"/>
</dbReference>
<dbReference type="Proteomes" id="UP000006698">
    <property type="component" value="Chromosome"/>
</dbReference>
<dbReference type="GO" id="GO:0070204">
    <property type="term" value="F:2-succinyl-5-enolpyruvyl-6-hydroxy-3-cyclohexene-1-carboxylic-acid synthase activity"/>
    <property type="evidence" value="ECO:0007669"/>
    <property type="project" value="UniProtKB-UniRule"/>
</dbReference>
<dbReference type="GO" id="GO:0000287">
    <property type="term" value="F:magnesium ion binding"/>
    <property type="evidence" value="ECO:0007669"/>
    <property type="project" value="UniProtKB-UniRule"/>
</dbReference>
<dbReference type="GO" id="GO:0030145">
    <property type="term" value="F:manganese ion binding"/>
    <property type="evidence" value="ECO:0007669"/>
    <property type="project" value="UniProtKB-UniRule"/>
</dbReference>
<dbReference type="GO" id="GO:0030976">
    <property type="term" value="F:thiamine pyrophosphate binding"/>
    <property type="evidence" value="ECO:0007669"/>
    <property type="project" value="UniProtKB-UniRule"/>
</dbReference>
<dbReference type="GO" id="GO:0009234">
    <property type="term" value="P:menaquinone biosynthetic process"/>
    <property type="evidence" value="ECO:0007669"/>
    <property type="project" value="UniProtKB-UniRule"/>
</dbReference>
<dbReference type="CDD" id="cd07037">
    <property type="entry name" value="TPP_PYR_MenD"/>
    <property type="match status" value="1"/>
</dbReference>
<dbReference type="CDD" id="cd02009">
    <property type="entry name" value="TPP_SHCHC_synthase"/>
    <property type="match status" value="1"/>
</dbReference>
<dbReference type="Gene3D" id="3.40.50.970">
    <property type="match status" value="2"/>
</dbReference>
<dbReference type="Gene3D" id="3.40.50.1220">
    <property type="entry name" value="TPP-binding domain"/>
    <property type="match status" value="1"/>
</dbReference>
<dbReference type="HAMAP" id="MF_01659">
    <property type="entry name" value="MenD"/>
    <property type="match status" value="1"/>
</dbReference>
<dbReference type="InterPro" id="IPR004433">
    <property type="entry name" value="MenaQ_synth_MenD"/>
</dbReference>
<dbReference type="InterPro" id="IPR029061">
    <property type="entry name" value="THDP-binding"/>
</dbReference>
<dbReference type="InterPro" id="IPR012001">
    <property type="entry name" value="Thiamin_PyroP_enz_TPP-bd_dom"/>
</dbReference>
<dbReference type="NCBIfam" id="TIGR00173">
    <property type="entry name" value="menD"/>
    <property type="match status" value="1"/>
</dbReference>
<dbReference type="PANTHER" id="PTHR42916">
    <property type="entry name" value="2-SUCCINYL-5-ENOLPYRUVYL-6-HYDROXY-3-CYCLOHEXENE-1-CARBOXYLATE SYNTHASE"/>
    <property type="match status" value="1"/>
</dbReference>
<dbReference type="PANTHER" id="PTHR42916:SF1">
    <property type="entry name" value="PROTEIN PHYLLO, CHLOROPLASTIC"/>
    <property type="match status" value="1"/>
</dbReference>
<dbReference type="Pfam" id="PF02776">
    <property type="entry name" value="TPP_enzyme_N"/>
    <property type="match status" value="1"/>
</dbReference>
<dbReference type="PIRSF" id="PIRSF004983">
    <property type="entry name" value="MenD"/>
    <property type="match status" value="1"/>
</dbReference>
<dbReference type="SUPFAM" id="SSF52518">
    <property type="entry name" value="Thiamin diphosphate-binding fold (THDP-binding)"/>
    <property type="match status" value="2"/>
</dbReference>
<keyword id="KW-0460">Magnesium</keyword>
<keyword id="KW-0464">Manganese</keyword>
<keyword id="KW-0474">Menaquinone biosynthesis</keyword>
<keyword id="KW-0479">Metal-binding</keyword>
<keyword id="KW-0786">Thiamine pyrophosphate</keyword>
<keyword id="KW-0808">Transferase</keyword>
<feature type="chain" id="PRO_0000341728" description="2-succinyl-5-enolpyruvyl-6-hydroxy-3-cyclohexene-1-carboxylate synthase">
    <location>
        <begin position="1"/>
        <end position="543"/>
    </location>
</feature>
<gene>
    <name evidence="1" type="primary">menD</name>
    <name type="ordered locus">cgR_0570</name>
</gene>
<sequence>MSSTPAQDLARAVIDSLAPHVTDVVLCPGSRNSPLSLELLARQDLRVHVRIDERSASFLALSLARTQARPVAVVMTSGTAVANCLPAVAEAAHAHIPLIVLSADRPAHLVGTGASQTINQTGIFGDLAPTVGITELDQVAQIAESLAQRASQIPRHFNLALDVPLVAPELPELHGEAVGASWTHRWINHGEVTVDLGEHTLVIAGDEAWEVEGLEDVPTIAEPTAPKPYNPVHPLAAEILLKEQVSAEGYVVNTRPDHVIVVGHPTLHRGVLKLMSDPEIKLTVLSRTDIITDPGRHADQVGSTVKVTGTQEKQWLKICSAASELSADGVRDVLDNQEFGFTGLHVAAAVADTLGTGDTLFATASNPIRDLSLVGMPFDGVDTFSPRGVAGIDGSVAQAIGTALAVQSRHPDEIRAPRTVALLGDLSFLHDIGGLLIGPDEPRPENLTIVVANDNGGGIFELLETGADGLRPNFERAFGTPHDASIADLCAGYGIEHQAVDNLQDLIIALVDTTEVSGFTVIEASTVRDTRRAQQQALMTKVR</sequence>
<accession>A4QBE1</accession>
<protein>
    <recommendedName>
        <fullName evidence="1">2-succinyl-5-enolpyruvyl-6-hydroxy-3-cyclohexene-1-carboxylate synthase</fullName>
        <shortName evidence="1">SEPHCHC synthase</shortName>
        <ecNumber evidence="1">2.2.1.9</ecNumber>
    </recommendedName>
    <alternativeName>
        <fullName evidence="1">Menaquinone biosynthesis protein MenD</fullName>
    </alternativeName>
</protein>
<proteinExistence type="inferred from homology"/>
<name>MEND_CORGB</name>
<organism>
    <name type="scientific">Corynebacterium glutamicum (strain R)</name>
    <dbReference type="NCBI Taxonomy" id="340322"/>
    <lineage>
        <taxon>Bacteria</taxon>
        <taxon>Bacillati</taxon>
        <taxon>Actinomycetota</taxon>
        <taxon>Actinomycetes</taxon>
        <taxon>Mycobacteriales</taxon>
        <taxon>Corynebacteriaceae</taxon>
        <taxon>Corynebacterium</taxon>
    </lineage>
</organism>
<reference key="1">
    <citation type="journal article" date="2007" name="Microbiology">
        <title>Comparative analysis of the Corynebacterium glutamicum group and complete genome sequence of strain R.</title>
        <authorList>
            <person name="Yukawa H."/>
            <person name="Omumasaba C.A."/>
            <person name="Nonaka H."/>
            <person name="Kos P."/>
            <person name="Okai N."/>
            <person name="Suzuki N."/>
            <person name="Suda M."/>
            <person name="Tsuge Y."/>
            <person name="Watanabe J."/>
            <person name="Ikeda Y."/>
            <person name="Vertes A.A."/>
            <person name="Inui M."/>
        </authorList>
    </citation>
    <scope>NUCLEOTIDE SEQUENCE [LARGE SCALE GENOMIC DNA]</scope>
    <source>
        <strain>R</strain>
    </source>
</reference>
<comment type="function">
    <text evidence="1">Catalyzes the thiamine diphosphate-dependent decarboxylation of 2-oxoglutarate and the subsequent addition of the resulting succinic semialdehyde-thiamine pyrophosphate anion to isochorismate to yield 2-succinyl-5-enolpyruvyl-6-hydroxy-3-cyclohexene-1-carboxylate (SEPHCHC).</text>
</comment>
<comment type="catalytic activity">
    <reaction evidence="1">
        <text>isochorismate + 2-oxoglutarate + H(+) = 5-enolpyruvoyl-6-hydroxy-2-succinyl-cyclohex-3-ene-1-carboxylate + CO2</text>
        <dbReference type="Rhea" id="RHEA:25593"/>
        <dbReference type="ChEBI" id="CHEBI:15378"/>
        <dbReference type="ChEBI" id="CHEBI:16526"/>
        <dbReference type="ChEBI" id="CHEBI:16810"/>
        <dbReference type="ChEBI" id="CHEBI:29780"/>
        <dbReference type="ChEBI" id="CHEBI:58818"/>
        <dbReference type="EC" id="2.2.1.9"/>
    </reaction>
</comment>
<comment type="cofactor">
    <cofactor evidence="1">
        <name>Mg(2+)</name>
        <dbReference type="ChEBI" id="CHEBI:18420"/>
    </cofactor>
    <cofactor evidence="1">
        <name>Mn(2+)</name>
        <dbReference type="ChEBI" id="CHEBI:29035"/>
    </cofactor>
</comment>
<comment type="cofactor">
    <cofactor evidence="1">
        <name>thiamine diphosphate</name>
        <dbReference type="ChEBI" id="CHEBI:58937"/>
    </cofactor>
    <text evidence="1">Binds 1 thiamine pyrophosphate per subunit.</text>
</comment>
<comment type="pathway">
    <text evidence="1">Quinol/quinone metabolism; 1,4-dihydroxy-2-naphthoate biosynthesis; 1,4-dihydroxy-2-naphthoate from chorismate: step 2/7.</text>
</comment>
<comment type="pathway">
    <text evidence="1">Quinol/quinone metabolism; menaquinone biosynthesis.</text>
</comment>
<comment type="subunit">
    <text evidence="1">Homodimer.</text>
</comment>
<comment type="similarity">
    <text evidence="1">Belongs to the TPP enzyme family. MenD subfamily.</text>
</comment>